<gene>
    <name evidence="1" type="primary">mgsA</name>
    <name type="ordered locus">SeHA_C1185</name>
</gene>
<keyword id="KW-0456">Lyase</keyword>
<sequence>MELTTRTLPTRKHIALVAHDHCKQMLMNWVERHQPLLEKHVLYATGTTGNLIQRATGMDVNAMLSGPMGGDQQVGALISEGKIDVLIFFWDPLNAVPHDPDVKALLRLATVWNIPVATNVSTADFIIQSPHFNDAVDILIPDYARYLAERLK</sequence>
<accession>B4TE03</accession>
<dbReference type="EC" id="4.2.3.3" evidence="1"/>
<dbReference type="EMBL" id="CP001120">
    <property type="protein sequence ID" value="ACF70386.1"/>
    <property type="molecule type" value="Genomic_DNA"/>
</dbReference>
<dbReference type="RefSeq" id="WP_000424187.1">
    <property type="nucleotide sequence ID" value="NC_011083.1"/>
</dbReference>
<dbReference type="SMR" id="B4TE03"/>
<dbReference type="KEGG" id="seh:SeHA_C1185"/>
<dbReference type="HOGENOM" id="CLU_120420_0_1_6"/>
<dbReference type="Proteomes" id="UP000001866">
    <property type="component" value="Chromosome"/>
</dbReference>
<dbReference type="GO" id="GO:0005829">
    <property type="term" value="C:cytosol"/>
    <property type="evidence" value="ECO:0007669"/>
    <property type="project" value="TreeGrafter"/>
</dbReference>
<dbReference type="GO" id="GO:0008929">
    <property type="term" value="F:methylglyoxal synthase activity"/>
    <property type="evidence" value="ECO:0007669"/>
    <property type="project" value="UniProtKB-UniRule"/>
</dbReference>
<dbReference type="GO" id="GO:0019242">
    <property type="term" value="P:methylglyoxal biosynthetic process"/>
    <property type="evidence" value="ECO:0007669"/>
    <property type="project" value="UniProtKB-UniRule"/>
</dbReference>
<dbReference type="CDD" id="cd01422">
    <property type="entry name" value="MGS"/>
    <property type="match status" value="1"/>
</dbReference>
<dbReference type="FunFam" id="3.40.50.1380:FF:000002">
    <property type="entry name" value="Methylglyoxal synthase"/>
    <property type="match status" value="1"/>
</dbReference>
<dbReference type="Gene3D" id="3.40.50.1380">
    <property type="entry name" value="Methylglyoxal synthase-like domain"/>
    <property type="match status" value="1"/>
</dbReference>
<dbReference type="HAMAP" id="MF_00549">
    <property type="entry name" value="Methylglyoxal_synth"/>
    <property type="match status" value="1"/>
</dbReference>
<dbReference type="InterPro" id="IPR004363">
    <property type="entry name" value="Methylgl_synth"/>
</dbReference>
<dbReference type="InterPro" id="IPR018148">
    <property type="entry name" value="Methylglyoxal_synth_AS"/>
</dbReference>
<dbReference type="InterPro" id="IPR011607">
    <property type="entry name" value="MGS-like_dom"/>
</dbReference>
<dbReference type="InterPro" id="IPR036914">
    <property type="entry name" value="MGS-like_dom_sf"/>
</dbReference>
<dbReference type="NCBIfam" id="TIGR00160">
    <property type="entry name" value="MGSA"/>
    <property type="match status" value="1"/>
</dbReference>
<dbReference type="NCBIfam" id="NF003559">
    <property type="entry name" value="PRK05234.1"/>
    <property type="match status" value="1"/>
</dbReference>
<dbReference type="PANTHER" id="PTHR30492">
    <property type="entry name" value="METHYLGLYOXAL SYNTHASE"/>
    <property type="match status" value="1"/>
</dbReference>
<dbReference type="PANTHER" id="PTHR30492:SF0">
    <property type="entry name" value="METHYLGLYOXAL SYNTHASE"/>
    <property type="match status" value="1"/>
</dbReference>
<dbReference type="Pfam" id="PF02142">
    <property type="entry name" value="MGS"/>
    <property type="match status" value="1"/>
</dbReference>
<dbReference type="PIRSF" id="PIRSF006614">
    <property type="entry name" value="Methylglyox_syn"/>
    <property type="match status" value="1"/>
</dbReference>
<dbReference type="SMART" id="SM00851">
    <property type="entry name" value="MGS"/>
    <property type="match status" value="1"/>
</dbReference>
<dbReference type="SUPFAM" id="SSF52335">
    <property type="entry name" value="Methylglyoxal synthase-like"/>
    <property type="match status" value="1"/>
</dbReference>
<dbReference type="PROSITE" id="PS01335">
    <property type="entry name" value="METHYLGLYOXAL_SYNTH"/>
    <property type="match status" value="1"/>
</dbReference>
<dbReference type="PROSITE" id="PS51855">
    <property type="entry name" value="MGS"/>
    <property type="match status" value="1"/>
</dbReference>
<evidence type="ECO:0000255" key="1">
    <source>
        <dbReference type="HAMAP-Rule" id="MF_00549"/>
    </source>
</evidence>
<protein>
    <recommendedName>
        <fullName evidence="1">Methylglyoxal synthase</fullName>
        <shortName evidence="1">MGS</shortName>
        <ecNumber evidence="1">4.2.3.3</ecNumber>
    </recommendedName>
</protein>
<organism>
    <name type="scientific">Salmonella heidelberg (strain SL476)</name>
    <dbReference type="NCBI Taxonomy" id="454169"/>
    <lineage>
        <taxon>Bacteria</taxon>
        <taxon>Pseudomonadati</taxon>
        <taxon>Pseudomonadota</taxon>
        <taxon>Gammaproteobacteria</taxon>
        <taxon>Enterobacterales</taxon>
        <taxon>Enterobacteriaceae</taxon>
        <taxon>Salmonella</taxon>
    </lineage>
</organism>
<proteinExistence type="inferred from homology"/>
<name>MGSA_SALHS</name>
<reference key="1">
    <citation type="journal article" date="2011" name="J. Bacteriol.">
        <title>Comparative genomics of 28 Salmonella enterica isolates: evidence for CRISPR-mediated adaptive sublineage evolution.</title>
        <authorList>
            <person name="Fricke W.F."/>
            <person name="Mammel M.K."/>
            <person name="McDermott P.F."/>
            <person name="Tartera C."/>
            <person name="White D.G."/>
            <person name="Leclerc J.E."/>
            <person name="Ravel J."/>
            <person name="Cebula T.A."/>
        </authorList>
    </citation>
    <scope>NUCLEOTIDE SEQUENCE [LARGE SCALE GENOMIC DNA]</scope>
    <source>
        <strain>SL476</strain>
    </source>
</reference>
<feature type="chain" id="PRO_1000129006" description="Methylglyoxal synthase">
    <location>
        <begin position="1"/>
        <end position="152"/>
    </location>
</feature>
<feature type="domain" description="MGS-like" evidence="1">
    <location>
        <begin position="6"/>
        <end position="152"/>
    </location>
</feature>
<feature type="active site" description="Proton donor/acceptor" evidence="1">
    <location>
        <position position="71"/>
    </location>
</feature>
<feature type="binding site" evidence="1">
    <location>
        <position position="19"/>
    </location>
    <ligand>
        <name>substrate</name>
    </ligand>
</feature>
<feature type="binding site" evidence="1">
    <location>
        <position position="23"/>
    </location>
    <ligand>
        <name>substrate</name>
    </ligand>
</feature>
<feature type="binding site" evidence="1">
    <location>
        <begin position="45"/>
        <end position="48"/>
    </location>
    <ligand>
        <name>substrate</name>
    </ligand>
</feature>
<feature type="binding site" evidence="1">
    <location>
        <begin position="65"/>
        <end position="66"/>
    </location>
    <ligand>
        <name>substrate</name>
    </ligand>
</feature>
<feature type="binding site" evidence="1">
    <location>
        <position position="98"/>
    </location>
    <ligand>
        <name>substrate</name>
    </ligand>
</feature>
<comment type="function">
    <text evidence="1">Catalyzes the formation of methylglyoxal from dihydroxyacetone phosphate.</text>
</comment>
<comment type="catalytic activity">
    <reaction evidence="1">
        <text>dihydroxyacetone phosphate = methylglyoxal + phosphate</text>
        <dbReference type="Rhea" id="RHEA:17937"/>
        <dbReference type="ChEBI" id="CHEBI:17158"/>
        <dbReference type="ChEBI" id="CHEBI:43474"/>
        <dbReference type="ChEBI" id="CHEBI:57642"/>
        <dbReference type="EC" id="4.2.3.3"/>
    </reaction>
</comment>
<comment type="similarity">
    <text evidence="1">Belongs to the methylglyoxal synthase family.</text>
</comment>